<comment type="subcellular location">
    <subcellularLocation>
        <location evidence="1">Cell inner membrane</location>
        <topology evidence="1">Multi-pass membrane protein</topology>
    </subcellularLocation>
</comment>
<comment type="similarity">
    <text evidence="1">Belongs to the major facilitator superfamily. DHA1 family. MdtH (TC 2.A.1.2.21) subfamily.</text>
</comment>
<gene>
    <name evidence="1" type="primary">mdtH</name>
    <name type="ordered locus">plu2089</name>
</gene>
<feature type="chain" id="PRO_0000173346" description="Multidrug resistance protein MdtH">
    <location>
        <begin position="1"/>
        <end position="401"/>
    </location>
</feature>
<feature type="transmembrane region" description="Helical" evidence="1">
    <location>
        <begin position="13"/>
        <end position="33"/>
    </location>
</feature>
<feature type="transmembrane region" description="Helical" evidence="1">
    <location>
        <begin position="34"/>
        <end position="54"/>
    </location>
</feature>
<feature type="transmembrane region" description="Helical" evidence="1">
    <location>
        <begin position="78"/>
        <end position="95"/>
    </location>
</feature>
<feature type="transmembrane region" description="Helical" evidence="1">
    <location>
        <begin position="99"/>
        <end position="116"/>
    </location>
</feature>
<feature type="transmembrane region" description="Helical" evidence="1">
    <location>
        <begin position="139"/>
        <end position="159"/>
    </location>
</feature>
<feature type="transmembrane region" description="Helical" evidence="1">
    <location>
        <begin position="165"/>
        <end position="185"/>
    </location>
</feature>
<feature type="transmembrane region" description="Helical" evidence="1">
    <location>
        <begin position="214"/>
        <end position="234"/>
    </location>
</feature>
<feature type="transmembrane region" description="Helical" evidence="1">
    <location>
        <begin position="243"/>
        <end position="263"/>
    </location>
</feature>
<feature type="transmembrane region" description="Helical" evidence="1">
    <location>
        <begin position="289"/>
        <end position="309"/>
    </location>
</feature>
<feature type="transmembrane region" description="Helical" evidence="1">
    <location>
        <begin position="340"/>
        <end position="360"/>
    </location>
</feature>
<feature type="transmembrane region" description="Helical" evidence="1">
    <location>
        <begin position="365"/>
        <end position="385"/>
    </location>
</feature>
<name>MDTH_PHOLL</name>
<reference key="1">
    <citation type="journal article" date="2003" name="Nat. Biotechnol.">
        <title>The genome sequence of the entomopathogenic bacterium Photorhabdus luminescens.</title>
        <authorList>
            <person name="Duchaud E."/>
            <person name="Rusniok C."/>
            <person name="Frangeul L."/>
            <person name="Buchrieser C."/>
            <person name="Givaudan A."/>
            <person name="Taourit S."/>
            <person name="Bocs S."/>
            <person name="Boursaux-Eude C."/>
            <person name="Chandler M."/>
            <person name="Charles J.-F."/>
            <person name="Dassa E."/>
            <person name="Derose R."/>
            <person name="Derzelle S."/>
            <person name="Freyssinet G."/>
            <person name="Gaudriault S."/>
            <person name="Medigue C."/>
            <person name="Lanois A."/>
            <person name="Powell K."/>
            <person name="Siguier P."/>
            <person name="Vincent R."/>
            <person name="Wingate V."/>
            <person name="Zouine M."/>
            <person name="Glaser P."/>
            <person name="Boemare N."/>
            <person name="Danchin A."/>
            <person name="Kunst F."/>
        </authorList>
    </citation>
    <scope>NUCLEOTIDE SEQUENCE [LARGE SCALE GENOMIC DNA]</scope>
    <source>
        <strain>DSM 15139 / CIP 105565 / TT01</strain>
    </source>
</reference>
<keyword id="KW-0997">Cell inner membrane</keyword>
<keyword id="KW-1003">Cell membrane</keyword>
<keyword id="KW-0472">Membrane</keyword>
<keyword id="KW-1185">Reference proteome</keyword>
<keyword id="KW-0812">Transmembrane</keyword>
<keyword id="KW-1133">Transmembrane helix</keyword>
<keyword id="KW-0813">Transport</keyword>
<dbReference type="EMBL" id="BX571866">
    <property type="protein sequence ID" value="CAE14382.1"/>
    <property type="molecule type" value="Genomic_DNA"/>
</dbReference>
<dbReference type="RefSeq" id="WP_011146344.1">
    <property type="nucleotide sequence ID" value="NC_005126.1"/>
</dbReference>
<dbReference type="SMR" id="Q7N568"/>
<dbReference type="STRING" id="243265.plu2089"/>
<dbReference type="GeneID" id="48848368"/>
<dbReference type="KEGG" id="plu:plu2089"/>
<dbReference type="eggNOG" id="COG0477">
    <property type="taxonomic scope" value="Bacteria"/>
</dbReference>
<dbReference type="HOGENOM" id="CLU_001265_60_2_6"/>
<dbReference type="OrthoDB" id="56516at2"/>
<dbReference type="Proteomes" id="UP000002514">
    <property type="component" value="Chromosome"/>
</dbReference>
<dbReference type="GO" id="GO:0005886">
    <property type="term" value="C:plasma membrane"/>
    <property type="evidence" value="ECO:0007669"/>
    <property type="project" value="UniProtKB-SubCell"/>
</dbReference>
<dbReference type="GO" id="GO:0022857">
    <property type="term" value="F:transmembrane transporter activity"/>
    <property type="evidence" value="ECO:0007669"/>
    <property type="project" value="UniProtKB-UniRule"/>
</dbReference>
<dbReference type="CDD" id="cd17329">
    <property type="entry name" value="MFS_MdtH_MDR_like"/>
    <property type="match status" value="1"/>
</dbReference>
<dbReference type="Gene3D" id="1.20.1250.20">
    <property type="entry name" value="MFS general substrate transporter like domains"/>
    <property type="match status" value="1"/>
</dbReference>
<dbReference type="HAMAP" id="MF_01529">
    <property type="entry name" value="MFS_MdtH"/>
    <property type="match status" value="1"/>
</dbReference>
<dbReference type="InterPro" id="IPR011701">
    <property type="entry name" value="MFS"/>
</dbReference>
<dbReference type="InterPro" id="IPR020846">
    <property type="entry name" value="MFS_dom"/>
</dbReference>
<dbReference type="InterPro" id="IPR036259">
    <property type="entry name" value="MFS_trans_sf"/>
</dbReference>
<dbReference type="InterPro" id="IPR050171">
    <property type="entry name" value="MFS_Transporters"/>
</dbReference>
<dbReference type="InterPro" id="IPR022855">
    <property type="entry name" value="Multidrug-R_MdtH"/>
</dbReference>
<dbReference type="NCBIfam" id="NF008650">
    <property type="entry name" value="PRK11646.1"/>
    <property type="match status" value="1"/>
</dbReference>
<dbReference type="PANTHER" id="PTHR23517:SF2">
    <property type="entry name" value="MULTIDRUG RESISTANCE PROTEIN MDTH"/>
    <property type="match status" value="1"/>
</dbReference>
<dbReference type="PANTHER" id="PTHR23517">
    <property type="entry name" value="RESISTANCE PROTEIN MDTM, PUTATIVE-RELATED-RELATED"/>
    <property type="match status" value="1"/>
</dbReference>
<dbReference type="Pfam" id="PF07690">
    <property type="entry name" value="MFS_1"/>
    <property type="match status" value="1"/>
</dbReference>
<dbReference type="SUPFAM" id="SSF103473">
    <property type="entry name" value="MFS general substrate transporter"/>
    <property type="match status" value="1"/>
</dbReference>
<dbReference type="PROSITE" id="PS50850">
    <property type="entry name" value="MFS"/>
    <property type="match status" value="1"/>
</dbReference>
<proteinExistence type="inferred from homology"/>
<sequence length="401" mass="44383">MSLVSQARSLGKYFLLFDNLLVVLGFFVVFPLISIHFVEQLGWAALVVGFALGLRQFVQQGLGIFGGAIADRFGAKPMIVTGMLLRALGFAFIALATEPWILWLACILSALGGTLFDPPRTALVIKLTRPHERGRFFSLLLMQDSAGAVIGALIGSWLLQYDFQFVCWTGAGVFVLAAIWNALFLPAYRISTTRTPIWEGMERVIKDRRFFTYVLTLTGYFMLSVQVMLMFPIIVNEIAGTPAAVKWMYAIEATLSLTLLYPIARWSEKRFRLEQRLMAGLFLMSLSMFPVGLIGEINTLFGLICLFYLGTVTAEPARETLSASLADPRARGSYMGFSRLGLALGGALGYTGGGWLYDTGHALNIPQLPWFLLGIIGLITLYALHRQFNQRKIESAMLSGN</sequence>
<accession>Q7N568</accession>
<organism>
    <name type="scientific">Photorhabdus laumondii subsp. laumondii (strain DSM 15139 / CIP 105565 / TT01)</name>
    <name type="common">Photorhabdus luminescens subsp. laumondii</name>
    <dbReference type="NCBI Taxonomy" id="243265"/>
    <lineage>
        <taxon>Bacteria</taxon>
        <taxon>Pseudomonadati</taxon>
        <taxon>Pseudomonadota</taxon>
        <taxon>Gammaproteobacteria</taxon>
        <taxon>Enterobacterales</taxon>
        <taxon>Morganellaceae</taxon>
        <taxon>Photorhabdus</taxon>
    </lineage>
</organism>
<evidence type="ECO:0000255" key="1">
    <source>
        <dbReference type="HAMAP-Rule" id="MF_01529"/>
    </source>
</evidence>
<protein>
    <recommendedName>
        <fullName evidence="1">Multidrug resistance protein MdtH</fullName>
    </recommendedName>
</protein>